<dbReference type="EC" id="3.6.1.-" evidence="1"/>
<dbReference type="EMBL" id="CP000110">
    <property type="protein sequence ID" value="ABB33805.1"/>
    <property type="molecule type" value="Genomic_DNA"/>
</dbReference>
<dbReference type="SMR" id="Q3ANM7"/>
<dbReference type="STRING" id="110662.Syncc9605_0026"/>
<dbReference type="KEGG" id="syd:Syncc9605_0026"/>
<dbReference type="eggNOG" id="COG1162">
    <property type="taxonomic scope" value="Bacteria"/>
</dbReference>
<dbReference type="HOGENOM" id="CLU_033617_2_1_3"/>
<dbReference type="OrthoDB" id="9809485at2"/>
<dbReference type="GO" id="GO:0005737">
    <property type="term" value="C:cytoplasm"/>
    <property type="evidence" value="ECO:0007669"/>
    <property type="project" value="UniProtKB-SubCell"/>
</dbReference>
<dbReference type="GO" id="GO:0005525">
    <property type="term" value="F:GTP binding"/>
    <property type="evidence" value="ECO:0007669"/>
    <property type="project" value="UniProtKB-UniRule"/>
</dbReference>
<dbReference type="GO" id="GO:0003924">
    <property type="term" value="F:GTPase activity"/>
    <property type="evidence" value="ECO:0007669"/>
    <property type="project" value="UniProtKB-UniRule"/>
</dbReference>
<dbReference type="GO" id="GO:0046872">
    <property type="term" value="F:metal ion binding"/>
    <property type="evidence" value="ECO:0007669"/>
    <property type="project" value="UniProtKB-KW"/>
</dbReference>
<dbReference type="GO" id="GO:0019843">
    <property type="term" value="F:rRNA binding"/>
    <property type="evidence" value="ECO:0007669"/>
    <property type="project" value="UniProtKB-KW"/>
</dbReference>
<dbReference type="GO" id="GO:0042274">
    <property type="term" value="P:ribosomal small subunit biogenesis"/>
    <property type="evidence" value="ECO:0007669"/>
    <property type="project" value="UniProtKB-UniRule"/>
</dbReference>
<dbReference type="CDD" id="cd01854">
    <property type="entry name" value="YjeQ_EngC"/>
    <property type="match status" value="1"/>
</dbReference>
<dbReference type="Gene3D" id="2.40.50.140">
    <property type="entry name" value="Nucleic acid-binding proteins"/>
    <property type="match status" value="1"/>
</dbReference>
<dbReference type="Gene3D" id="3.40.50.300">
    <property type="entry name" value="P-loop containing nucleotide triphosphate hydrolases"/>
    <property type="match status" value="1"/>
</dbReference>
<dbReference type="Gene3D" id="1.10.40.50">
    <property type="entry name" value="Probable gtpase engc, domain 3"/>
    <property type="match status" value="1"/>
</dbReference>
<dbReference type="HAMAP" id="MF_01820">
    <property type="entry name" value="GTPase_RsgA"/>
    <property type="match status" value="1"/>
</dbReference>
<dbReference type="InterPro" id="IPR030378">
    <property type="entry name" value="G_CP_dom"/>
</dbReference>
<dbReference type="InterPro" id="IPR012340">
    <property type="entry name" value="NA-bd_OB-fold"/>
</dbReference>
<dbReference type="InterPro" id="IPR027417">
    <property type="entry name" value="P-loop_NTPase"/>
</dbReference>
<dbReference type="InterPro" id="IPR004881">
    <property type="entry name" value="Ribosome_biogen_GTPase_RsgA"/>
</dbReference>
<dbReference type="InterPro" id="IPR010914">
    <property type="entry name" value="RsgA_GTPase_dom"/>
</dbReference>
<dbReference type="NCBIfam" id="TIGR00157">
    <property type="entry name" value="ribosome small subunit-dependent GTPase A"/>
    <property type="match status" value="1"/>
</dbReference>
<dbReference type="PANTHER" id="PTHR32120">
    <property type="entry name" value="SMALL RIBOSOMAL SUBUNIT BIOGENESIS GTPASE RSGA"/>
    <property type="match status" value="1"/>
</dbReference>
<dbReference type="PANTHER" id="PTHR32120:SF11">
    <property type="entry name" value="SMALL RIBOSOMAL SUBUNIT BIOGENESIS GTPASE RSGA 1, MITOCHONDRIAL-RELATED"/>
    <property type="match status" value="1"/>
</dbReference>
<dbReference type="Pfam" id="PF03193">
    <property type="entry name" value="RsgA_GTPase"/>
    <property type="match status" value="1"/>
</dbReference>
<dbReference type="SUPFAM" id="SSF50249">
    <property type="entry name" value="Nucleic acid-binding proteins"/>
    <property type="match status" value="1"/>
</dbReference>
<dbReference type="SUPFAM" id="SSF52540">
    <property type="entry name" value="P-loop containing nucleoside triphosphate hydrolases"/>
    <property type="match status" value="1"/>
</dbReference>
<dbReference type="PROSITE" id="PS50936">
    <property type="entry name" value="ENGC_GTPASE"/>
    <property type="match status" value="1"/>
</dbReference>
<dbReference type="PROSITE" id="PS51721">
    <property type="entry name" value="G_CP"/>
    <property type="match status" value="1"/>
</dbReference>
<keyword id="KW-0963">Cytoplasm</keyword>
<keyword id="KW-0342">GTP-binding</keyword>
<keyword id="KW-0378">Hydrolase</keyword>
<keyword id="KW-0479">Metal-binding</keyword>
<keyword id="KW-0547">Nucleotide-binding</keyword>
<keyword id="KW-0690">Ribosome biogenesis</keyword>
<keyword id="KW-0694">RNA-binding</keyword>
<keyword id="KW-0699">rRNA-binding</keyword>
<keyword id="KW-0862">Zinc</keyword>
<proteinExistence type="inferred from homology"/>
<protein>
    <recommendedName>
        <fullName evidence="1">Small ribosomal subunit biogenesis GTPase RsgA</fullName>
        <ecNumber evidence="1">3.6.1.-</ecNumber>
    </recommendedName>
</protein>
<comment type="function">
    <text evidence="1">One of several proteins that assist in the late maturation steps of the functional core of the 30S ribosomal subunit. Helps release RbfA from mature subunits. May play a role in the assembly of ribosomal proteins into the subunit. Circularly permuted GTPase that catalyzes slow GTP hydrolysis, GTPase activity is stimulated by the 30S ribosomal subunit.</text>
</comment>
<comment type="cofactor">
    <cofactor evidence="1">
        <name>Zn(2+)</name>
        <dbReference type="ChEBI" id="CHEBI:29105"/>
    </cofactor>
    <text evidence="1">Binds 1 zinc ion per subunit.</text>
</comment>
<comment type="subunit">
    <text evidence="1">Monomer. Associates with 30S ribosomal subunit, binds 16S rRNA.</text>
</comment>
<comment type="subcellular location">
    <subcellularLocation>
        <location evidence="1">Cytoplasm</location>
    </subcellularLocation>
</comment>
<comment type="similarity">
    <text evidence="1">Belongs to the TRAFAC class YlqF/YawG GTPase family. RsgA subfamily.</text>
</comment>
<evidence type="ECO:0000255" key="1">
    <source>
        <dbReference type="HAMAP-Rule" id="MF_01820"/>
    </source>
</evidence>
<evidence type="ECO:0000255" key="2">
    <source>
        <dbReference type="PROSITE-ProRule" id="PRU01058"/>
    </source>
</evidence>
<feature type="chain" id="PRO_1000188145" description="Small ribosomal subunit biogenesis GTPase RsgA">
    <location>
        <begin position="1"/>
        <end position="304"/>
    </location>
</feature>
<feature type="domain" description="CP-type G" evidence="2">
    <location>
        <begin position="78"/>
        <end position="237"/>
    </location>
</feature>
<feature type="binding site" evidence="1">
    <location>
        <begin position="127"/>
        <end position="130"/>
    </location>
    <ligand>
        <name>GTP</name>
        <dbReference type="ChEBI" id="CHEBI:37565"/>
    </ligand>
</feature>
<feature type="binding site" evidence="1">
    <location>
        <begin position="179"/>
        <end position="187"/>
    </location>
    <ligand>
        <name>GTP</name>
        <dbReference type="ChEBI" id="CHEBI:37565"/>
    </ligand>
</feature>
<feature type="binding site" evidence="1">
    <location>
        <position position="262"/>
    </location>
    <ligand>
        <name>Zn(2+)</name>
        <dbReference type="ChEBI" id="CHEBI:29105"/>
    </ligand>
</feature>
<feature type="binding site" evidence="1">
    <location>
        <position position="267"/>
    </location>
    <ligand>
        <name>Zn(2+)</name>
        <dbReference type="ChEBI" id="CHEBI:29105"/>
    </ligand>
</feature>
<feature type="binding site" evidence="1">
    <location>
        <position position="269"/>
    </location>
    <ligand>
        <name>Zn(2+)</name>
        <dbReference type="ChEBI" id="CHEBI:29105"/>
    </ligand>
</feature>
<feature type="binding site" evidence="1">
    <location>
        <position position="275"/>
    </location>
    <ligand>
        <name>Zn(2+)</name>
        <dbReference type="ChEBI" id="CHEBI:29105"/>
    </ligand>
</feature>
<accession>Q3ANM7</accession>
<sequence length="304" mass="32936">MADTARSVASGMVVALQANYLEVELDVAPDGCPGRLLCTRRTRLSHRGEAVYVGDRVRVEAIDPGQGRAVVAEVEPRHSFLTRPPVANVSLVAVVLAVEQPSFDPDQASRFLLTAERTGLEVILLLTKTDLLSAAALERLVTRLQGWGYDPLAFSSAAGTGIDALRQRLAGAQLSVLCGPSGVGKSSLLNQLCPDLQLRTAAVSGRLQRGRHTTRHVELFPLGPSARVADTPGFNRPDLPEDPQELGVLFPELRKQLDPWPCRFRDCLHRGEPGCGVSTDWERYSLYEAALIEQSSLSRPSRGG</sequence>
<organism>
    <name type="scientific">Synechococcus sp. (strain CC9605)</name>
    <dbReference type="NCBI Taxonomy" id="110662"/>
    <lineage>
        <taxon>Bacteria</taxon>
        <taxon>Bacillati</taxon>
        <taxon>Cyanobacteriota</taxon>
        <taxon>Cyanophyceae</taxon>
        <taxon>Synechococcales</taxon>
        <taxon>Synechococcaceae</taxon>
        <taxon>Synechococcus</taxon>
    </lineage>
</organism>
<gene>
    <name evidence="1" type="primary">rsgA</name>
    <name type="ordered locus">Syncc9605_0026</name>
</gene>
<reference key="1">
    <citation type="submission" date="2005-07" db="EMBL/GenBank/DDBJ databases">
        <title>Complete sequence of Synechococcus sp. CC9605.</title>
        <authorList>
            <consortium name="US DOE Joint Genome Institute"/>
            <person name="Copeland A."/>
            <person name="Lucas S."/>
            <person name="Lapidus A."/>
            <person name="Barry K."/>
            <person name="Detter J.C."/>
            <person name="Glavina T."/>
            <person name="Hammon N."/>
            <person name="Israni S."/>
            <person name="Pitluck S."/>
            <person name="Schmutz J."/>
            <person name="Martinez M."/>
            <person name="Larimer F."/>
            <person name="Land M."/>
            <person name="Kyrpides N."/>
            <person name="Ivanova N."/>
            <person name="Richardson P."/>
        </authorList>
    </citation>
    <scope>NUCLEOTIDE SEQUENCE [LARGE SCALE GENOMIC DNA]</scope>
    <source>
        <strain>CC9605</strain>
    </source>
</reference>
<name>RSGA_SYNSC</name>